<protein>
    <recommendedName>
        <fullName evidence="1">UDP-N-acetylglucosamine 1-carboxyvinyltransferase</fullName>
        <ecNumber evidence="1">2.5.1.7</ecNumber>
    </recommendedName>
    <alternativeName>
        <fullName evidence="1">Enoylpyruvate transferase</fullName>
    </alternativeName>
    <alternativeName>
        <fullName evidence="1">UDP-N-acetylglucosamine enolpyruvyl transferase</fullName>
        <shortName evidence="1">EPT</shortName>
    </alternativeName>
</protein>
<comment type="function">
    <text evidence="1">Cell wall formation. Adds enolpyruvyl to UDP-N-acetylglucosamine.</text>
</comment>
<comment type="catalytic activity">
    <reaction evidence="1">
        <text>phosphoenolpyruvate + UDP-N-acetyl-alpha-D-glucosamine = UDP-N-acetyl-3-O-(1-carboxyvinyl)-alpha-D-glucosamine + phosphate</text>
        <dbReference type="Rhea" id="RHEA:18681"/>
        <dbReference type="ChEBI" id="CHEBI:43474"/>
        <dbReference type="ChEBI" id="CHEBI:57705"/>
        <dbReference type="ChEBI" id="CHEBI:58702"/>
        <dbReference type="ChEBI" id="CHEBI:68483"/>
        <dbReference type="EC" id="2.5.1.7"/>
    </reaction>
</comment>
<comment type="pathway">
    <text evidence="1">Cell wall biogenesis; peptidoglycan biosynthesis.</text>
</comment>
<comment type="subcellular location">
    <subcellularLocation>
        <location evidence="1">Cytoplasm</location>
    </subcellularLocation>
</comment>
<comment type="similarity">
    <text evidence="1">Belongs to the EPSP synthase family. MurA subfamily.</text>
</comment>
<feature type="chain" id="PRO_1000117507" description="UDP-N-acetylglucosamine 1-carboxyvinyltransferase">
    <location>
        <begin position="1"/>
        <end position="419"/>
    </location>
</feature>
<feature type="active site" description="Proton donor" evidence="1">
    <location>
        <position position="115"/>
    </location>
</feature>
<feature type="binding site" evidence="1">
    <location>
        <begin position="22"/>
        <end position="23"/>
    </location>
    <ligand>
        <name>phosphoenolpyruvate</name>
        <dbReference type="ChEBI" id="CHEBI:58702"/>
    </ligand>
</feature>
<feature type="binding site" evidence="1">
    <location>
        <position position="91"/>
    </location>
    <ligand>
        <name>UDP-N-acetyl-alpha-D-glucosamine</name>
        <dbReference type="ChEBI" id="CHEBI:57705"/>
    </ligand>
</feature>
<feature type="binding site" evidence="1">
    <location>
        <begin position="120"/>
        <end position="124"/>
    </location>
    <ligand>
        <name>UDP-N-acetyl-alpha-D-glucosamine</name>
        <dbReference type="ChEBI" id="CHEBI:57705"/>
    </ligand>
</feature>
<feature type="binding site" evidence="1">
    <location>
        <begin position="160"/>
        <end position="163"/>
    </location>
    <ligand>
        <name>UDP-N-acetyl-alpha-D-glucosamine</name>
        <dbReference type="ChEBI" id="CHEBI:57705"/>
    </ligand>
</feature>
<feature type="binding site" evidence="1">
    <location>
        <position position="305"/>
    </location>
    <ligand>
        <name>UDP-N-acetyl-alpha-D-glucosamine</name>
        <dbReference type="ChEBI" id="CHEBI:57705"/>
    </ligand>
</feature>
<feature type="binding site" evidence="1">
    <location>
        <position position="327"/>
    </location>
    <ligand>
        <name>UDP-N-acetyl-alpha-D-glucosamine</name>
        <dbReference type="ChEBI" id="CHEBI:57705"/>
    </ligand>
</feature>
<feature type="modified residue" description="2-(S-cysteinyl)pyruvic acid O-phosphothioketal" evidence="1">
    <location>
        <position position="115"/>
    </location>
</feature>
<organism>
    <name type="scientific">Escherichia coli O17:K52:H18 (strain UMN026 / ExPEC)</name>
    <dbReference type="NCBI Taxonomy" id="585056"/>
    <lineage>
        <taxon>Bacteria</taxon>
        <taxon>Pseudomonadati</taxon>
        <taxon>Pseudomonadota</taxon>
        <taxon>Gammaproteobacteria</taxon>
        <taxon>Enterobacterales</taxon>
        <taxon>Enterobacteriaceae</taxon>
        <taxon>Escherichia</taxon>
    </lineage>
</organism>
<keyword id="KW-0131">Cell cycle</keyword>
<keyword id="KW-0132">Cell division</keyword>
<keyword id="KW-0133">Cell shape</keyword>
<keyword id="KW-0961">Cell wall biogenesis/degradation</keyword>
<keyword id="KW-0963">Cytoplasm</keyword>
<keyword id="KW-0573">Peptidoglycan synthesis</keyword>
<keyword id="KW-0670">Pyruvate</keyword>
<keyword id="KW-0808">Transferase</keyword>
<name>MURA_ECOLU</name>
<evidence type="ECO:0000255" key="1">
    <source>
        <dbReference type="HAMAP-Rule" id="MF_00111"/>
    </source>
</evidence>
<proteinExistence type="inferred from homology"/>
<accession>B7NDH3</accession>
<dbReference type="EC" id="2.5.1.7" evidence="1"/>
<dbReference type="EMBL" id="CU928163">
    <property type="protein sequence ID" value="CAR14823.1"/>
    <property type="molecule type" value="Genomic_DNA"/>
</dbReference>
<dbReference type="RefSeq" id="WP_000357259.1">
    <property type="nucleotide sequence ID" value="NC_011751.1"/>
</dbReference>
<dbReference type="RefSeq" id="YP_002414328.1">
    <property type="nucleotide sequence ID" value="NC_011751.1"/>
</dbReference>
<dbReference type="SMR" id="B7NDH3"/>
<dbReference type="STRING" id="585056.ECUMN_3669"/>
<dbReference type="GeneID" id="93778792"/>
<dbReference type="KEGG" id="eum:ECUMN_3669"/>
<dbReference type="PATRIC" id="fig|585056.7.peg.3849"/>
<dbReference type="HOGENOM" id="CLU_027387_0_0_6"/>
<dbReference type="UniPathway" id="UPA00219"/>
<dbReference type="Proteomes" id="UP000007097">
    <property type="component" value="Chromosome"/>
</dbReference>
<dbReference type="GO" id="GO:0005737">
    <property type="term" value="C:cytoplasm"/>
    <property type="evidence" value="ECO:0007669"/>
    <property type="project" value="UniProtKB-SubCell"/>
</dbReference>
<dbReference type="GO" id="GO:0008760">
    <property type="term" value="F:UDP-N-acetylglucosamine 1-carboxyvinyltransferase activity"/>
    <property type="evidence" value="ECO:0007669"/>
    <property type="project" value="UniProtKB-UniRule"/>
</dbReference>
<dbReference type="GO" id="GO:0051301">
    <property type="term" value="P:cell division"/>
    <property type="evidence" value="ECO:0007669"/>
    <property type="project" value="UniProtKB-KW"/>
</dbReference>
<dbReference type="GO" id="GO:0071555">
    <property type="term" value="P:cell wall organization"/>
    <property type="evidence" value="ECO:0007669"/>
    <property type="project" value="UniProtKB-KW"/>
</dbReference>
<dbReference type="GO" id="GO:0009252">
    <property type="term" value="P:peptidoglycan biosynthetic process"/>
    <property type="evidence" value="ECO:0007669"/>
    <property type="project" value="UniProtKB-UniRule"/>
</dbReference>
<dbReference type="GO" id="GO:0008360">
    <property type="term" value="P:regulation of cell shape"/>
    <property type="evidence" value="ECO:0007669"/>
    <property type="project" value="UniProtKB-KW"/>
</dbReference>
<dbReference type="GO" id="GO:0019277">
    <property type="term" value="P:UDP-N-acetylgalactosamine biosynthetic process"/>
    <property type="evidence" value="ECO:0007669"/>
    <property type="project" value="InterPro"/>
</dbReference>
<dbReference type="CDD" id="cd01555">
    <property type="entry name" value="UdpNAET"/>
    <property type="match status" value="1"/>
</dbReference>
<dbReference type="FunFam" id="3.65.10.10:FF:000002">
    <property type="entry name" value="UDP-N-acetylglucosamine 1-carboxyvinyltransferase"/>
    <property type="match status" value="1"/>
</dbReference>
<dbReference type="Gene3D" id="3.65.10.10">
    <property type="entry name" value="Enolpyruvate transferase domain"/>
    <property type="match status" value="2"/>
</dbReference>
<dbReference type="HAMAP" id="MF_00111">
    <property type="entry name" value="MurA"/>
    <property type="match status" value="1"/>
</dbReference>
<dbReference type="InterPro" id="IPR001986">
    <property type="entry name" value="Enolpyruvate_Tfrase_dom"/>
</dbReference>
<dbReference type="InterPro" id="IPR036968">
    <property type="entry name" value="Enolpyruvate_Tfrase_sf"/>
</dbReference>
<dbReference type="InterPro" id="IPR050068">
    <property type="entry name" value="MurA_subfamily"/>
</dbReference>
<dbReference type="InterPro" id="IPR013792">
    <property type="entry name" value="RNA3'P_cycl/enolpyr_Trfase_a/b"/>
</dbReference>
<dbReference type="InterPro" id="IPR005750">
    <property type="entry name" value="UDP_GlcNAc_COvinyl_MurA"/>
</dbReference>
<dbReference type="NCBIfam" id="TIGR01072">
    <property type="entry name" value="murA"/>
    <property type="match status" value="1"/>
</dbReference>
<dbReference type="NCBIfam" id="NF006873">
    <property type="entry name" value="PRK09369.1"/>
    <property type="match status" value="1"/>
</dbReference>
<dbReference type="PANTHER" id="PTHR43783">
    <property type="entry name" value="UDP-N-ACETYLGLUCOSAMINE 1-CARBOXYVINYLTRANSFERASE"/>
    <property type="match status" value="1"/>
</dbReference>
<dbReference type="PANTHER" id="PTHR43783:SF1">
    <property type="entry name" value="UDP-N-ACETYLGLUCOSAMINE 1-CARBOXYVINYLTRANSFERASE"/>
    <property type="match status" value="1"/>
</dbReference>
<dbReference type="Pfam" id="PF00275">
    <property type="entry name" value="EPSP_synthase"/>
    <property type="match status" value="1"/>
</dbReference>
<dbReference type="SUPFAM" id="SSF55205">
    <property type="entry name" value="EPT/RTPC-like"/>
    <property type="match status" value="1"/>
</dbReference>
<sequence>MDKFRVQGPTKLQGEVTISGAKNAALPILFAALLAEEPVEIQNVPKLKDVDTSMKLLSQLGAKVERNGSVHIDARDVNVFCAPYDLVKTMRASIWALGPLVARFGQGQVSLPGGCTIGARPVDLHISGLEQLGATIKLEEGYVKASVDGRLKGAHIVMDKVSVGATVTIMCAATLAEGTTIIENAAREPEIVDTANFLITLGAKISGQGTDRIVIEGVERLGGGVYRVLPDRIETGTFLVAAAISRGKIICRNAQPDTLDAVLAKLRDAGADIEVGEDWISLDMHGKRPKAVNVRTAPHPAFPTDMQAQFTLLNLVAEGTGFITETVFENRFMHVPELSRMGAHAEIESNTVICHGVEKLSGAQVMATDLRASASLVLAGCIAEGTTVVDRIYHIDRGYERIEDKLRALGANIERVKGE</sequence>
<gene>
    <name evidence="1" type="primary">murA</name>
    <name type="ordered locus">ECUMN_3669</name>
</gene>
<reference key="1">
    <citation type="journal article" date="2009" name="PLoS Genet.">
        <title>Organised genome dynamics in the Escherichia coli species results in highly diverse adaptive paths.</title>
        <authorList>
            <person name="Touchon M."/>
            <person name="Hoede C."/>
            <person name="Tenaillon O."/>
            <person name="Barbe V."/>
            <person name="Baeriswyl S."/>
            <person name="Bidet P."/>
            <person name="Bingen E."/>
            <person name="Bonacorsi S."/>
            <person name="Bouchier C."/>
            <person name="Bouvet O."/>
            <person name="Calteau A."/>
            <person name="Chiapello H."/>
            <person name="Clermont O."/>
            <person name="Cruveiller S."/>
            <person name="Danchin A."/>
            <person name="Diard M."/>
            <person name="Dossat C."/>
            <person name="Karoui M.E."/>
            <person name="Frapy E."/>
            <person name="Garry L."/>
            <person name="Ghigo J.M."/>
            <person name="Gilles A.M."/>
            <person name="Johnson J."/>
            <person name="Le Bouguenec C."/>
            <person name="Lescat M."/>
            <person name="Mangenot S."/>
            <person name="Martinez-Jehanne V."/>
            <person name="Matic I."/>
            <person name="Nassif X."/>
            <person name="Oztas S."/>
            <person name="Petit M.A."/>
            <person name="Pichon C."/>
            <person name="Rouy Z."/>
            <person name="Ruf C.S."/>
            <person name="Schneider D."/>
            <person name="Tourret J."/>
            <person name="Vacherie B."/>
            <person name="Vallenet D."/>
            <person name="Medigue C."/>
            <person name="Rocha E.P.C."/>
            <person name="Denamur E."/>
        </authorList>
    </citation>
    <scope>NUCLEOTIDE SEQUENCE [LARGE SCALE GENOMIC DNA]</scope>
    <source>
        <strain>UMN026 / ExPEC</strain>
    </source>
</reference>